<proteinExistence type="inferred from homology"/>
<reference key="1">
    <citation type="journal article" date="2008" name="J. Bacteriol.">
        <title>The pangenome structure of Escherichia coli: comparative genomic analysis of E. coli commensal and pathogenic isolates.</title>
        <authorList>
            <person name="Rasko D.A."/>
            <person name="Rosovitz M.J."/>
            <person name="Myers G.S.A."/>
            <person name="Mongodin E.F."/>
            <person name="Fricke W.F."/>
            <person name="Gajer P."/>
            <person name="Crabtree J."/>
            <person name="Sebaihia M."/>
            <person name="Thomson N.R."/>
            <person name="Chaudhuri R."/>
            <person name="Henderson I.R."/>
            <person name="Sperandio V."/>
            <person name="Ravel J."/>
        </authorList>
    </citation>
    <scope>NUCLEOTIDE SEQUENCE [LARGE SCALE GENOMIC DNA]</scope>
    <source>
        <strain>E24377A / ETEC</strain>
    </source>
</reference>
<protein>
    <recommendedName>
        <fullName evidence="1">UPF0412 protein YaaI</fullName>
    </recommendedName>
</protein>
<evidence type="ECO:0000255" key="1">
    <source>
        <dbReference type="HAMAP-Rule" id="MF_01372"/>
    </source>
</evidence>
<sequence>MKSVFTISASLAISLMLCCTAQANDHKILGVIAMPRNETNDLALKLPVCRIVKRIQLSADHGDLQLSGASVYFKAARSASQSLNIPSEIKEGQTTDWININSDNDNKRCVSKITFSGHTVNSSDMATLKIIGDD</sequence>
<name>YAAI_ECO24</name>
<feature type="signal peptide" evidence="1">
    <location>
        <begin position="1"/>
        <end position="23"/>
    </location>
</feature>
<feature type="chain" id="PRO_1000068202" description="UPF0412 protein YaaI">
    <location>
        <begin position="24"/>
        <end position="134"/>
    </location>
</feature>
<gene>
    <name evidence="1" type="primary">yaaI</name>
    <name type="ordered locus">EcE24377A_0012</name>
</gene>
<dbReference type="EMBL" id="CP000800">
    <property type="protein sequence ID" value="ABV19681.1"/>
    <property type="molecule type" value="Genomic_DNA"/>
</dbReference>
<dbReference type="RefSeq" id="WP_000843559.1">
    <property type="nucleotide sequence ID" value="NC_009801.1"/>
</dbReference>
<dbReference type="KEGG" id="ecw:EcE24377A_0012"/>
<dbReference type="HOGENOM" id="CLU_158661_0_0_6"/>
<dbReference type="Proteomes" id="UP000001122">
    <property type="component" value="Chromosome"/>
</dbReference>
<dbReference type="HAMAP" id="MF_01372">
    <property type="entry name" value="UPF0412"/>
    <property type="match status" value="1"/>
</dbReference>
<dbReference type="InterPro" id="IPR020240">
    <property type="entry name" value="UPF0412_YaaI"/>
</dbReference>
<dbReference type="NCBIfam" id="NF007541">
    <property type="entry name" value="PRK10154.1"/>
    <property type="match status" value="1"/>
</dbReference>
<dbReference type="Pfam" id="PF10807">
    <property type="entry name" value="DUF2541"/>
    <property type="match status" value="1"/>
</dbReference>
<comment type="similarity">
    <text evidence="1">Belongs to the UPF0412 family.</text>
</comment>
<organism>
    <name type="scientific">Escherichia coli O139:H28 (strain E24377A / ETEC)</name>
    <dbReference type="NCBI Taxonomy" id="331111"/>
    <lineage>
        <taxon>Bacteria</taxon>
        <taxon>Pseudomonadati</taxon>
        <taxon>Pseudomonadota</taxon>
        <taxon>Gammaproteobacteria</taxon>
        <taxon>Enterobacterales</taxon>
        <taxon>Enterobacteriaceae</taxon>
        <taxon>Escherichia</taxon>
    </lineage>
</organism>
<keyword id="KW-1185">Reference proteome</keyword>
<keyword id="KW-0732">Signal</keyword>
<accession>A7ZHA2</accession>